<gene>
    <name type="primary">GPT1</name>
</gene>
<organism>
    <name type="scientific">Candida albicans</name>
    <name type="common">Yeast</name>
    <dbReference type="NCBI Taxonomy" id="5476"/>
    <lineage>
        <taxon>Eukaryota</taxon>
        <taxon>Fungi</taxon>
        <taxon>Dikarya</taxon>
        <taxon>Ascomycota</taxon>
        <taxon>Saccharomycotina</taxon>
        <taxon>Pichiomycetes</taxon>
        <taxon>Debaryomycetaceae</taxon>
        <taxon>Candida/Lodderomyces clade</taxon>
        <taxon>Candida</taxon>
    </lineage>
</organism>
<protein>
    <recommendedName>
        <fullName>Putative polyamine transporter</fullName>
    </recommendedName>
</protein>
<name>GPT1_CANAX</name>
<proteinExistence type="inferred from homology"/>
<sequence>MGIASILSNKNITINVDHVIDSDEAMLLAIGYRQELRREFSLWSIFAVSFSVLGLLPSIAACFDYQQLVVGMSPLPWLIAMIFITSVAYSMAEIASAFPCSAGTPYAVSQLAPKKYASFLTWFTCWTNWSCQITAAPSVSYSCACMMLALHSFTDPSFVASNAQIFGLTTGIQVLCAFMACFPTKWVARFSSAGTTCNIVFLVVVFIMILGGNKRDQIKEGISKFNSNSTAWGLDNQAEWPTGLSFLISFMGVIWAMSGYDSPFHLAEKCSNAAVAAPRAIVLTSTVGGLIGFMFMIAIAYTLVDLNQISADPESLGQPFVTYLTQIMDKNLVIGATALTIISSFFMAQNCLLASSRVTYAYARDGLFPLSGIWKKVSPKTQTPINAVIMNFIVEELLLLLIFGGDVSIGSIFSIGALAGFISFTMPTLLKITYARKTFQPGPWNLGKWSEPIGWVSVAFVGLMVPILCFPTVKGADLTPTEMNWTCLVYFGLILLTTIWFVVYARRWYVGPRTNISEEDIVYGEKTEDEGDEIPDVIDGQKVSISSTEKRYQ</sequence>
<feature type="chain" id="PRO_0000054153" description="Putative polyamine transporter">
    <location>
        <begin position="1"/>
        <end position="553"/>
    </location>
</feature>
<feature type="transmembrane region" description="Helical" evidence="1">
    <location>
        <begin position="43"/>
        <end position="63"/>
    </location>
</feature>
<feature type="transmembrane region" description="Helical" evidence="1">
    <location>
        <begin position="68"/>
        <end position="88"/>
    </location>
</feature>
<feature type="transmembrane region" description="Helical" evidence="1">
    <location>
        <begin position="133"/>
        <end position="153"/>
    </location>
</feature>
<feature type="transmembrane region" description="Helical" evidence="1">
    <location>
        <begin position="163"/>
        <end position="183"/>
    </location>
</feature>
<feature type="transmembrane region" description="Helical" evidence="1">
    <location>
        <begin position="190"/>
        <end position="210"/>
    </location>
</feature>
<feature type="transmembrane region" description="Helical" evidence="1">
    <location>
        <begin position="240"/>
        <end position="260"/>
    </location>
</feature>
<feature type="transmembrane region" description="Helical" evidence="1">
    <location>
        <begin position="280"/>
        <end position="300"/>
    </location>
</feature>
<feature type="transmembrane region" description="Helical" evidence="1">
    <location>
        <begin position="333"/>
        <end position="353"/>
    </location>
</feature>
<feature type="transmembrane region" description="Helical" evidence="1">
    <location>
        <begin position="397"/>
        <end position="417"/>
    </location>
</feature>
<feature type="transmembrane region" description="Helical" evidence="1">
    <location>
        <begin position="453"/>
        <end position="473"/>
    </location>
</feature>
<feature type="transmembrane region" description="Helical" evidence="1">
    <location>
        <begin position="485"/>
        <end position="505"/>
    </location>
</feature>
<reference key="1">
    <citation type="journal article" date="2001" name="Yeast">
        <title>Isolation of a gene encoding a putative polyamine transporter from Candida albicans, GPT1.</title>
        <authorList>
            <person name="McNemar M.D."/>
            <person name="Gorman J.A."/>
            <person name="Buckley H.R."/>
        </authorList>
    </citation>
    <scope>NUCLEOTIDE SEQUENCE [GENOMIC DNA]</scope>
</reference>
<dbReference type="EMBL" id="AF080132">
    <property type="protein sequence ID" value="AAC31569.1"/>
    <property type="molecule type" value="Genomic_DNA"/>
</dbReference>
<dbReference type="SMR" id="O74248"/>
<dbReference type="VEuPathDB" id="FungiDB:C1_05080W_A"/>
<dbReference type="VEuPathDB" id="FungiDB:CAWG_00890"/>
<dbReference type="GO" id="GO:0016020">
    <property type="term" value="C:membrane"/>
    <property type="evidence" value="ECO:0007669"/>
    <property type="project" value="UniProtKB-SubCell"/>
</dbReference>
<dbReference type="GO" id="GO:0022857">
    <property type="term" value="F:transmembrane transporter activity"/>
    <property type="evidence" value="ECO:0007669"/>
    <property type="project" value="InterPro"/>
</dbReference>
<dbReference type="FunFam" id="1.20.1740.10:FF:000046">
    <property type="entry name" value="Amino-acid permease, putative"/>
    <property type="match status" value="1"/>
</dbReference>
<dbReference type="Gene3D" id="1.20.1740.10">
    <property type="entry name" value="Amino acid/polyamine transporter I"/>
    <property type="match status" value="1"/>
</dbReference>
<dbReference type="InterPro" id="IPR002293">
    <property type="entry name" value="AA/rel_permease1"/>
</dbReference>
<dbReference type="PANTHER" id="PTHR45649:SF29">
    <property type="entry name" value="AMINO ACID TRANSPORTER (EUROFUNG)"/>
    <property type="match status" value="1"/>
</dbReference>
<dbReference type="PANTHER" id="PTHR45649">
    <property type="entry name" value="AMINO-ACID PERMEASE BAT1"/>
    <property type="match status" value="1"/>
</dbReference>
<dbReference type="Pfam" id="PF13520">
    <property type="entry name" value="AA_permease_2"/>
    <property type="match status" value="1"/>
</dbReference>
<dbReference type="PIRSF" id="PIRSF006060">
    <property type="entry name" value="AA_transporter"/>
    <property type="match status" value="1"/>
</dbReference>
<comment type="subcellular location">
    <subcellularLocation>
        <location evidence="2">Membrane</location>
        <topology evidence="2">Multi-pass membrane protein</topology>
    </subcellularLocation>
</comment>
<comment type="similarity">
    <text evidence="2">Belongs to the amino acid-polyamine-organocation (APC) superfamily.</text>
</comment>
<accession>O74248</accession>
<evidence type="ECO:0000255" key="1"/>
<evidence type="ECO:0000305" key="2"/>
<keyword id="KW-0472">Membrane</keyword>
<keyword id="KW-0812">Transmembrane</keyword>
<keyword id="KW-1133">Transmembrane helix</keyword>
<keyword id="KW-0813">Transport</keyword>